<comment type="function">
    <text evidence="1">Produces ATP from ADP in the presence of a proton gradient across the membrane. The catalytic sites are hosted primarily by the beta subunits.</text>
</comment>
<comment type="catalytic activity">
    <reaction evidence="1">
        <text>ATP + H2O + 4 H(+)(in) = ADP + phosphate + 5 H(+)(out)</text>
        <dbReference type="Rhea" id="RHEA:57720"/>
        <dbReference type="ChEBI" id="CHEBI:15377"/>
        <dbReference type="ChEBI" id="CHEBI:15378"/>
        <dbReference type="ChEBI" id="CHEBI:30616"/>
        <dbReference type="ChEBI" id="CHEBI:43474"/>
        <dbReference type="ChEBI" id="CHEBI:456216"/>
        <dbReference type="EC" id="7.1.2.2"/>
    </reaction>
</comment>
<comment type="subunit">
    <text evidence="1">F-type ATPases have 2 components, CF(1) - the catalytic core - and CF(0) - the membrane proton channel. CF(1) has five subunits: alpha(3), beta(3), gamma(1), delta(1), epsilon(1). CF(0) has three main subunits: a(1), b(2) and c(9-12). The alpha and beta chains form an alternating ring which encloses part of the gamma chain. CF(1) is attached to CF(0) by a central stalk formed by the gamma and epsilon chains, while a peripheral stalk is formed by the delta and b chains.</text>
</comment>
<comment type="subcellular location">
    <subcellularLocation>
        <location evidence="1">Cell membrane</location>
        <topology evidence="1">Peripheral membrane protein</topology>
    </subcellularLocation>
</comment>
<comment type="similarity">
    <text evidence="1">Belongs to the ATPase alpha/beta chains family.</text>
</comment>
<gene>
    <name evidence="1" type="primary">atpD</name>
    <name type="ordered locus">UPA3_0135</name>
</gene>
<proteinExistence type="inferred from homology"/>
<sequence length="464" mass="50834">MTEVKKGKINQILGPVVDVRFPSEWLPEINTALELNNHGSKLVLEVSQLVGDNIARCIAMDTTDGLVRGQEVINTQKPITMPVGKQVLGRMFNVTGDPIDEQPAPTGKRMPIHRPAPSFAEQAESIEILETGIKVVDLLVPFAKGGKIGLFGGAGVGKTVLMQELIHNIAKNHGGLSVFAGVGERTREGNDLYYEMAESDVLDKTALVFGQMNEPPGARMRVALSGLTMAEEFRDAFGQDVLLFIDNIFRFTQAGSEVSALLGRMPSAVGYQPTLAFEMGQLQERITSTKKGSITSVQAVYVPADDLTDPAPATTFSHLDAKVVLDRAIASLGLYPAISPLQSTSRLLDPLVVGVKHYSVARRVIEILQRFMELQDIIAILGMDELSEEDRQLVMRARKVRNYLSQPSHVAEKFSGQPGLSVKLEDTIEGFRKILDGECDDIHEQHFLYVGKIDDVFEKAAKNK</sequence>
<organism>
    <name type="scientific">Ureaplasma parvum serovar 3 (strain ATCC 27815 / 27 / NCTC 11736)</name>
    <dbReference type="NCBI Taxonomy" id="505682"/>
    <lineage>
        <taxon>Bacteria</taxon>
        <taxon>Bacillati</taxon>
        <taxon>Mycoplasmatota</taxon>
        <taxon>Mycoplasmoidales</taxon>
        <taxon>Mycoplasmoidaceae</taxon>
        <taxon>Ureaplasma</taxon>
    </lineage>
</organism>
<protein>
    <recommendedName>
        <fullName evidence="1">ATP synthase subunit beta</fullName>
        <ecNumber evidence="1">7.1.2.2</ecNumber>
    </recommendedName>
    <alternativeName>
        <fullName evidence="1">ATP synthase F1 sector subunit beta</fullName>
    </alternativeName>
    <alternativeName>
        <fullName evidence="1">F-ATPase subunit beta</fullName>
    </alternativeName>
</protein>
<feature type="chain" id="PRO_1000086931" description="ATP synthase subunit beta">
    <location>
        <begin position="1"/>
        <end position="464"/>
    </location>
</feature>
<feature type="binding site" evidence="1">
    <location>
        <begin position="152"/>
        <end position="159"/>
    </location>
    <ligand>
        <name>ATP</name>
        <dbReference type="ChEBI" id="CHEBI:30616"/>
    </ligand>
</feature>
<accession>B1AIB8</accession>
<evidence type="ECO:0000255" key="1">
    <source>
        <dbReference type="HAMAP-Rule" id="MF_01347"/>
    </source>
</evidence>
<reference key="1">
    <citation type="submission" date="2008-02" db="EMBL/GenBank/DDBJ databases">
        <title>Genome sequence of Ureaplasma parvum serovar 3.</title>
        <authorList>
            <person name="Methe B.A."/>
            <person name="Glass J."/>
            <person name="Waites K."/>
            <person name="Shrivastava S."/>
        </authorList>
    </citation>
    <scope>NUCLEOTIDE SEQUENCE [LARGE SCALE GENOMIC DNA]</scope>
    <source>
        <strain>ATCC 27815 / 27 / NCTC 11736</strain>
    </source>
</reference>
<dbReference type="EC" id="7.1.2.2" evidence="1"/>
<dbReference type="EMBL" id="CP000942">
    <property type="protein sequence ID" value="ACA33002.1"/>
    <property type="molecule type" value="Genomic_DNA"/>
</dbReference>
<dbReference type="RefSeq" id="WP_006688878.1">
    <property type="nucleotide sequence ID" value="NC_010503.1"/>
</dbReference>
<dbReference type="SMR" id="B1AIB8"/>
<dbReference type="GeneID" id="29672255"/>
<dbReference type="KEGG" id="upa:UPA3_0135"/>
<dbReference type="HOGENOM" id="CLU_022398_0_2_14"/>
<dbReference type="Proteomes" id="UP000002162">
    <property type="component" value="Chromosome"/>
</dbReference>
<dbReference type="GO" id="GO:0005886">
    <property type="term" value="C:plasma membrane"/>
    <property type="evidence" value="ECO:0007669"/>
    <property type="project" value="UniProtKB-SubCell"/>
</dbReference>
<dbReference type="GO" id="GO:0045259">
    <property type="term" value="C:proton-transporting ATP synthase complex"/>
    <property type="evidence" value="ECO:0007669"/>
    <property type="project" value="UniProtKB-KW"/>
</dbReference>
<dbReference type="GO" id="GO:0005524">
    <property type="term" value="F:ATP binding"/>
    <property type="evidence" value="ECO:0007669"/>
    <property type="project" value="UniProtKB-UniRule"/>
</dbReference>
<dbReference type="GO" id="GO:0016887">
    <property type="term" value="F:ATP hydrolysis activity"/>
    <property type="evidence" value="ECO:0007669"/>
    <property type="project" value="InterPro"/>
</dbReference>
<dbReference type="GO" id="GO:0046933">
    <property type="term" value="F:proton-transporting ATP synthase activity, rotational mechanism"/>
    <property type="evidence" value="ECO:0007669"/>
    <property type="project" value="UniProtKB-UniRule"/>
</dbReference>
<dbReference type="CDD" id="cd18110">
    <property type="entry name" value="ATP-synt_F1_beta_C"/>
    <property type="match status" value="1"/>
</dbReference>
<dbReference type="CDD" id="cd18115">
    <property type="entry name" value="ATP-synt_F1_beta_N"/>
    <property type="match status" value="1"/>
</dbReference>
<dbReference type="CDD" id="cd01133">
    <property type="entry name" value="F1-ATPase_beta_CD"/>
    <property type="match status" value="1"/>
</dbReference>
<dbReference type="FunFam" id="1.10.1140.10:FF:000005">
    <property type="entry name" value="ATP synthase subunit beta"/>
    <property type="match status" value="1"/>
</dbReference>
<dbReference type="FunFam" id="3.40.50.300:FF:000004">
    <property type="entry name" value="ATP synthase subunit beta"/>
    <property type="match status" value="1"/>
</dbReference>
<dbReference type="Gene3D" id="2.40.10.170">
    <property type="match status" value="1"/>
</dbReference>
<dbReference type="Gene3D" id="1.10.1140.10">
    <property type="entry name" value="Bovine Mitochondrial F1-atpase, Atp Synthase Beta Chain, Chain D, domain 3"/>
    <property type="match status" value="1"/>
</dbReference>
<dbReference type="Gene3D" id="3.40.50.300">
    <property type="entry name" value="P-loop containing nucleotide triphosphate hydrolases"/>
    <property type="match status" value="1"/>
</dbReference>
<dbReference type="HAMAP" id="MF_01347">
    <property type="entry name" value="ATP_synth_beta_bact"/>
    <property type="match status" value="1"/>
</dbReference>
<dbReference type="InterPro" id="IPR003593">
    <property type="entry name" value="AAA+_ATPase"/>
</dbReference>
<dbReference type="InterPro" id="IPR055190">
    <property type="entry name" value="ATP-synt_VA_C"/>
</dbReference>
<dbReference type="InterPro" id="IPR005722">
    <property type="entry name" value="ATP_synth_F1_bsu"/>
</dbReference>
<dbReference type="InterPro" id="IPR050053">
    <property type="entry name" value="ATPase_alpha/beta_chains"/>
</dbReference>
<dbReference type="InterPro" id="IPR004100">
    <property type="entry name" value="ATPase_F1/V1/A1_a/bsu_N"/>
</dbReference>
<dbReference type="InterPro" id="IPR036121">
    <property type="entry name" value="ATPase_F1/V1/A1_a/bsu_N_sf"/>
</dbReference>
<dbReference type="InterPro" id="IPR000194">
    <property type="entry name" value="ATPase_F1/V1/A1_a/bsu_nucl-bd"/>
</dbReference>
<dbReference type="InterPro" id="IPR024034">
    <property type="entry name" value="ATPase_F1/V1_b/a_C"/>
</dbReference>
<dbReference type="InterPro" id="IPR027417">
    <property type="entry name" value="P-loop_NTPase"/>
</dbReference>
<dbReference type="NCBIfam" id="TIGR01039">
    <property type="entry name" value="atpD"/>
    <property type="match status" value="1"/>
</dbReference>
<dbReference type="PANTHER" id="PTHR15184">
    <property type="entry name" value="ATP SYNTHASE"/>
    <property type="match status" value="1"/>
</dbReference>
<dbReference type="PANTHER" id="PTHR15184:SF71">
    <property type="entry name" value="ATP SYNTHASE SUBUNIT BETA, MITOCHONDRIAL"/>
    <property type="match status" value="1"/>
</dbReference>
<dbReference type="Pfam" id="PF00006">
    <property type="entry name" value="ATP-synt_ab"/>
    <property type="match status" value="1"/>
</dbReference>
<dbReference type="Pfam" id="PF02874">
    <property type="entry name" value="ATP-synt_ab_N"/>
    <property type="match status" value="1"/>
</dbReference>
<dbReference type="Pfam" id="PF22919">
    <property type="entry name" value="ATP-synt_VA_C"/>
    <property type="match status" value="1"/>
</dbReference>
<dbReference type="SMART" id="SM00382">
    <property type="entry name" value="AAA"/>
    <property type="match status" value="1"/>
</dbReference>
<dbReference type="SUPFAM" id="SSF47917">
    <property type="entry name" value="C-terminal domain of alpha and beta subunits of F1 ATP synthase"/>
    <property type="match status" value="1"/>
</dbReference>
<dbReference type="SUPFAM" id="SSF50615">
    <property type="entry name" value="N-terminal domain of alpha and beta subunits of F1 ATP synthase"/>
    <property type="match status" value="1"/>
</dbReference>
<dbReference type="SUPFAM" id="SSF52540">
    <property type="entry name" value="P-loop containing nucleoside triphosphate hydrolases"/>
    <property type="match status" value="1"/>
</dbReference>
<keyword id="KW-0066">ATP synthesis</keyword>
<keyword id="KW-0067">ATP-binding</keyword>
<keyword id="KW-1003">Cell membrane</keyword>
<keyword id="KW-0139">CF(1)</keyword>
<keyword id="KW-0375">Hydrogen ion transport</keyword>
<keyword id="KW-0406">Ion transport</keyword>
<keyword id="KW-0472">Membrane</keyword>
<keyword id="KW-0547">Nucleotide-binding</keyword>
<keyword id="KW-1278">Translocase</keyword>
<keyword id="KW-0813">Transport</keyword>
<name>ATPB_UREP2</name>